<proteinExistence type="inferred from homology"/>
<organism>
    <name type="scientific">Salmonella gallinarum (strain 287/91 / NCTC 13346)</name>
    <dbReference type="NCBI Taxonomy" id="550538"/>
    <lineage>
        <taxon>Bacteria</taxon>
        <taxon>Pseudomonadati</taxon>
        <taxon>Pseudomonadota</taxon>
        <taxon>Gammaproteobacteria</taxon>
        <taxon>Enterobacterales</taxon>
        <taxon>Enterobacteriaceae</taxon>
        <taxon>Salmonella</taxon>
    </lineage>
</organism>
<reference key="1">
    <citation type="journal article" date="2008" name="Genome Res.">
        <title>Comparative genome analysis of Salmonella enteritidis PT4 and Salmonella gallinarum 287/91 provides insights into evolutionary and host adaptation pathways.</title>
        <authorList>
            <person name="Thomson N.R."/>
            <person name="Clayton D.J."/>
            <person name="Windhorst D."/>
            <person name="Vernikos G."/>
            <person name="Davidson S."/>
            <person name="Churcher C."/>
            <person name="Quail M.A."/>
            <person name="Stevens M."/>
            <person name="Jones M.A."/>
            <person name="Watson M."/>
            <person name="Barron A."/>
            <person name="Layton A."/>
            <person name="Pickard D."/>
            <person name="Kingsley R.A."/>
            <person name="Bignell A."/>
            <person name="Clark L."/>
            <person name="Harris B."/>
            <person name="Ormond D."/>
            <person name="Abdellah Z."/>
            <person name="Brooks K."/>
            <person name="Cherevach I."/>
            <person name="Chillingworth T."/>
            <person name="Woodward J."/>
            <person name="Norberczak H."/>
            <person name="Lord A."/>
            <person name="Arrowsmith C."/>
            <person name="Jagels K."/>
            <person name="Moule S."/>
            <person name="Mungall K."/>
            <person name="Saunders M."/>
            <person name="Whitehead S."/>
            <person name="Chabalgoity J.A."/>
            <person name="Maskell D."/>
            <person name="Humphreys T."/>
            <person name="Roberts M."/>
            <person name="Barrow P.A."/>
            <person name="Dougan G."/>
            <person name="Parkhill J."/>
        </authorList>
    </citation>
    <scope>NUCLEOTIDE SEQUENCE [LARGE SCALE GENOMIC DNA]</scope>
    <source>
        <strain>287/91 / NCTC 13346</strain>
    </source>
</reference>
<accession>B5R5R5</accession>
<feature type="chain" id="PRO_1000136523" description="Esterase FrsA">
    <location>
        <begin position="1"/>
        <end position="414"/>
    </location>
</feature>
<dbReference type="EC" id="3.1.1.1" evidence="1"/>
<dbReference type="EMBL" id="AM933173">
    <property type="protein sequence ID" value="CAR36231.1"/>
    <property type="molecule type" value="Genomic_DNA"/>
</dbReference>
<dbReference type="RefSeq" id="WP_000189586.1">
    <property type="nucleotide sequence ID" value="NC_011274.1"/>
</dbReference>
<dbReference type="SMR" id="B5R5R5"/>
<dbReference type="ESTHER" id="salty-yafa">
    <property type="family name" value="Duf_1100-R"/>
</dbReference>
<dbReference type="KEGG" id="seg:SG0329"/>
<dbReference type="HOGENOM" id="CLU_036819_0_0_6"/>
<dbReference type="Proteomes" id="UP000008321">
    <property type="component" value="Chromosome"/>
</dbReference>
<dbReference type="GO" id="GO:0106435">
    <property type="term" value="F:carboxylesterase activity"/>
    <property type="evidence" value="ECO:0007669"/>
    <property type="project" value="UniProtKB-EC"/>
</dbReference>
<dbReference type="FunFam" id="3.40.50.1820:FF:000022">
    <property type="entry name" value="Esterase FrsA"/>
    <property type="match status" value="1"/>
</dbReference>
<dbReference type="Gene3D" id="3.40.50.1820">
    <property type="entry name" value="alpha/beta hydrolase"/>
    <property type="match status" value="1"/>
</dbReference>
<dbReference type="HAMAP" id="MF_01063">
    <property type="entry name" value="FrsA"/>
    <property type="match status" value="1"/>
</dbReference>
<dbReference type="InterPro" id="IPR029058">
    <property type="entry name" value="AB_hydrolase_fold"/>
</dbReference>
<dbReference type="InterPro" id="IPR043423">
    <property type="entry name" value="FrsA"/>
</dbReference>
<dbReference type="InterPro" id="IPR010520">
    <property type="entry name" value="FrsA-like"/>
</dbReference>
<dbReference type="InterPro" id="IPR050261">
    <property type="entry name" value="FrsA_esterase"/>
</dbReference>
<dbReference type="NCBIfam" id="NF003460">
    <property type="entry name" value="PRK05077.1"/>
    <property type="match status" value="1"/>
</dbReference>
<dbReference type="PANTHER" id="PTHR22946">
    <property type="entry name" value="DIENELACTONE HYDROLASE DOMAIN-CONTAINING PROTEIN-RELATED"/>
    <property type="match status" value="1"/>
</dbReference>
<dbReference type="PANTHER" id="PTHR22946:SF4">
    <property type="entry name" value="ESTERASE FRSA"/>
    <property type="match status" value="1"/>
</dbReference>
<dbReference type="Pfam" id="PF06500">
    <property type="entry name" value="FrsA-like"/>
    <property type="match status" value="1"/>
</dbReference>
<dbReference type="SUPFAM" id="SSF53474">
    <property type="entry name" value="alpha/beta-Hydrolases"/>
    <property type="match status" value="1"/>
</dbReference>
<comment type="function">
    <text evidence="1">Catalyzes the hydrolysis of esters.</text>
</comment>
<comment type="catalytic activity">
    <reaction evidence="1">
        <text>a carboxylic ester + H2O = an alcohol + a carboxylate + H(+)</text>
        <dbReference type="Rhea" id="RHEA:21164"/>
        <dbReference type="ChEBI" id="CHEBI:15377"/>
        <dbReference type="ChEBI" id="CHEBI:15378"/>
        <dbReference type="ChEBI" id="CHEBI:29067"/>
        <dbReference type="ChEBI" id="CHEBI:30879"/>
        <dbReference type="ChEBI" id="CHEBI:33308"/>
        <dbReference type="EC" id="3.1.1.1"/>
    </reaction>
</comment>
<comment type="similarity">
    <text evidence="1">Belongs to the FrsA family.</text>
</comment>
<gene>
    <name evidence="1" type="primary">frsA</name>
    <name type="ordered locus">SG0329</name>
</gene>
<protein>
    <recommendedName>
        <fullName evidence="1">Esterase FrsA</fullName>
        <ecNumber evidence="1">3.1.1.1</ecNumber>
    </recommendedName>
</protein>
<name>FRSA_SALG2</name>
<sequence>MTQANLSETLFKPRFKHTETSTLVRRFNRGSQPPMQSALDGKNVPHWYRMINRLMWIWRGVDPREILDVQARIVMSDAERTDDDLYDTVIGYRGGNWIYEWAKQAMDWQQKACQEQDAMRSGRYWLHASTLYNIAAYPHLKGDELAEQAQALANRAYEEAAQRLPGSLREMEFAVPGGSPVTAFLHMPKGDGPFPTVLMCGGLDAMQTDYYTLYERYFAPRGIAMLTLDMPSVGFSSKWKLTQDSSLLHQHVLKALPNVPWVDHTRVAAFGFRFGANVAVRLAYLEAPRLKAVACLGPVVHALLSDPQRQSTVPEMYLDVLASRLGMHDASDEALRVELNRYSLKVQGLLGRRCPTPMLSGFWKNDPFSPEEESRLITTSSSDGKLIEIPFNPVYRNFDHALQEITDWINHRLC</sequence>
<evidence type="ECO:0000255" key="1">
    <source>
        <dbReference type="HAMAP-Rule" id="MF_01063"/>
    </source>
</evidence>
<keyword id="KW-0378">Hydrolase</keyword>
<keyword id="KW-0719">Serine esterase</keyword>